<name>ERPA_PSEA6</name>
<reference key="1">
    <citation type="submission" date="2006-06" db="EMBL/GenBank/DDBJ databases">
        <title>Complete sequence of Pseudoalteromonas atlantica T6c.</title>
        <authorList>
            <consortium name="US DOE Joint Genome Institute"/>
            <person name="Copeland A."/>
            <person name="Lucas S."/>
            <person name="Lapidus A."/>
            <person name="Barry K."/>
            <person name="Detter J.C."/>
            <person name="Glavina del Rio T."/>
            <person name="Hammon N."/>
            <person name="Israni S."/>
            <person name="Dalin E."/>
            <person name="Tice H."/>
            <person name="Pitluck S."/>
            <person name="Saunders E."/>
            <person name="Brettin T."/>
            <person name="Bruce D."/>
            <person name="Han C."/>
            <person name="Tapia R."/>
            <person name="Gilna P."/>
            <person name="Schmutz J."/>
            <person name="Larimer F."/>
            <person name="Land M."/>
            <person name="Hauser L."/>
            <person name="Kyrpides N."/>
            <person name="Kim E."/>
            <person name="Karls A.C."/>
            <person name="Bartlett D."/>
            <person name="Higgins B.P."/>
            <person name="Richardson P."/>
        </authorList>
    </citation>
    <scope>NUCLEOTIDE SEQUENCE [LARGE SCALE GENOMIC DNA]</scope>
    <source>
        <strain>T6c / ATCC BAA-1087</strain>
    </source>
</reference>
<comment type="function">
    <text evidence="1">Required for insertion of 4Fe-4S clusters for at least IspG.</text>
</comment>
<comment type="cofactor">
    <cofactor evidence="1">
        <name>iron-sulfur cluster</name>
        <dbReference type="ChEBI" id="CHEBI:30408"/>
    </cofactor>
    <text evidence="1">Binds 1 iron-sulfur cluster per subunit.</text>
</comment>
<comment type="subunit">
    <text evidence="1">Homodimer.</text>
</comment>
<comment type="similarity">
    <text evidence="1">Belongs to the HesB/IscA family.</text>
</comment>
<organism>
    <name type="scientific">Pseudoalteromonas atlantica (strain T6c / ATCC BAA-1087)</name>
    <dbReference type="NCBI Taxonomy" id="3042615"/>
    <lineage>
        <taxon>Bacteria</taxon>
        <taxon>Pseudomonadati</taxon>
        <taxon>Pseudomonadota</taxon>
        <taxon>Gammaproteobacteria</taxon>
        <taxon>Alteromonadales</taxon>
        <taxon>Alteromonadaceae</taxon>
        <taxon>Paraglaciecola</taxon>
    </lineage>
</organism>
<keyword id="KW-0408">Iron</keyword>
<keyword id="KW-0411">Iron-sulfur</keyword>
<keyword id="KW-0479">Metal-binding</keyword>
<feature type="chain" id="PRO_0000311521" description="Iron-sulfur cluster insertion protein ErpA">
    <location>
        <begin position="1"/>
        <end position="114"/>
    </location>
</feature>
<feature type="binding site" evidence="1">
    <location>
        <position position="42"/>
    </location>
    <ligand>
        <name>iron-sulfur cluster</name>
        <dbReference type="ChEBI" id="CHEBI:30408"/>
    </ligand>
</feature>
<feature type="binding site" evidence="1">
    <location>
        <position position="106"/>
    </location>
    <ligand>
        <name>iron-sulfur cluster</name>
        <dbReference type="ChEBI" id="CHEBI:30408"/>
    </ligand>
</feature>
<feature type="binding site" evidence="1">
    <location>
        <position position="108"/>
    </location>
    <ligand>
        <name>iron-sulfur cluster</name>
        <dbReference type="ChEBI" id="CHEBI:30408"/>
    </ligand>
</feature>
<proteinExistence type="inferred from homology"/>
<sequence>MSVQTAVPIEFSDAAARKVKALVEEEENPNLKLRVYVTGGGCSGFQYGFTFDEKVNDGDTTIDKDQVTLVVDPMSLQYLLGGEVDYTEGLEGSRFLVNNPNATTTCGCGASFTV</sequence>
<protein>
    <recommendedName>
        <fullName evidence="1">Iron-sulfur cluster insertion protein ErpA</fullName>
    </recommendedName>
</protein>
<accession>Q15YG5</accession>
<gene>
    <name evidence="1" type="primary">erpA</name>
    <name type="ordered locus">Patl_0544</name>
</gene>
<dbReference type="EMBL" id="CP000388">
    <property type="protein sequence ID" value="ABG39073.1"/>
    <property type="molecule type" value="Genomic_DNA"/>
</dbReference>
<dbReference type="RefSeq" id="WP_011573453.1">
    <property type="nucleotide sequence ID" value="NC_008228.1"/>
</dbReference>
<dbReference type="SMR" id="Q15YG5"/>
<dbReference type="STRING" id="342610.Patl_0544"/>
<dbReference type="KEGG" id="pat:Patl_0544"/>
<dbReference type="eggNOG" id="COG0316">
    <property type="taxonomic scope" value="Bacteria"/>
</dbReference>
<dbReference type="HOGENOM" id="CLU_069054_5_3_6"/>
<dbReference type="OrthoDB" id="9801228at2"/>
<dbReference type="Proteomes" id="UP000001981">
    <property type="component" value="Chromosome"/>
</dbReference>
<dbReference type="GO" id="GO:0005829">
    <property type="term" value="C:cytosol"/>
    <property type="evidence" value="ECO:0007669"/>
    <property type="project" value="TreeGrafter"/>
</dbReference>
<dbReference type="GO" id="GO:0051537">
    <property type="term" value="F:2 iron, 2 sulfur cluster binding"/>
    <property type="evidence" value="ECO:0007669"/>
    <property type="project" value="UniProtKB-ARBA"/>
</dbReference>
<dbReference type="GO" id="GO:0051539">
    <property type="term" value="F:4 iron, 4 sulfur cluster binding"/>
    <property type="evidence" value="ECO:0007669"/>
    <property type="project" value="TreeGrafter"/>
</dbReference>
<dbReference type="GO" id="GO:0005506">
    <property type="term" value="F:iron ion binding"/>
    <property type="evidence" value="ECO:0007669"/>
    <property type="project" value="UniProtKB-UniRule"/>
</dbReference>
<dbReference type="GO" id="GO:0016226">
    <property type="term" value="P:iron-sulfur cluster assembly"/>
    <property type="evidence" value="ECO:0007669"/>
    <property type="project" value="UniProtKB-UniRule"/>
</dbReference>
<dbReference type="FunFam" id="2.60.300.12:FF:000002">
    <property type="entry name" value="Iron-sulfur cluster insertion protein ErpA"/>
    <property type="match status" value="1"/>
</dbReference>
<dbReference type="Gene3D" id="2.60.300.12">
    <property type="entry name" value="HesB-like domain"/>
    <property type="match status" value="1"/>
</dbReference>
<dbReference type="HAMAP" id="MF_01380">
    <property type="entry name" value="Fe_S_insert_ErpA"/>
    <property type="match status" value="1"/>
</dbReference>
<dbReference type="InterPro" id="IPR000361">
    <property type="entry name" value="FeS_biogenesis"/>
</dbReference>
<dbReference type="InterPro" id="IPR016092">
    <property type="entry name" value="FeS_cluster_insertion"/>
</dbReference>
<dbReference type="InterPro" id="IPR017870">
    <property type="entry name" value="FeS_cluster_insertion_CS"/>
</dbReference>
<dbReference type="InterPro" id="IPR023063">
    <property type="entry name" value="FeS_cluster_insertion_RrpA"/>
</dbReference>
<dbReference type="InterPro" id="IPR035903">
    <property type="entry name" value="HesB-like_dom_sf"/>
</dbReference>
<dbReference type="NCBIfam" id="TIGR00049">
    <property type="entry name" value="iron-sulfur cluster assembly accessory protein"/>
    <property type="match status" value="1"/>
</dbReference>
<dbReference type="NCBIfam" id="NF010147">
    <property type="entry name" value="PRK13623.1"/>
    <property type="match status" value="1"/>
</dbReference>
<dbReference type="PANTHER" id="PTHR43011">
    <property type="entry name" value="IRON-SULFUR CLUSTER ASSEMBLY 2 HOMOLOG, MITOCHONDRIAL"/>
    <property type="match status" value="1"/>
</dbReference>
<dbReference type="PANTHER" id="PTHR43011:SF1">
    <property type="entry name" value="IRON-SULFUR CLUSTER ASSEMBLY 2 HOMOLOG, MITOCHONDRIAL"/>
    <property type="match status" value="1"/>
</dbReference>
<dbReference type="Pfam" id="PF01521">
    <property type="entry name" value="Fe-S_biosyn"/>
    <property type="match status" value="1"/>
</dbReference>
<dbReference type="SUPFAM" id="SSF89360">
    <property type="entry name" value="HesB-like domain"/>
    <property type="match status" value="1"/>
</dbReference>
<dbReference type="PROSITE" id="PS01152">
    <property type="entry name" value="HESB"/>
    <property type="match status" value="1"/>
</dbReference>
<evidence type="ECO:0000255" key="1">
    <source>
        <dbReference type="HAMAP-Rule" id="MF_01380"/>
    </source>
</evidence>